<accession>P22991</accession>
<name>YHV1_LACHE</name>
<protein>
    <recommendedName>
        <fullName>Uncharacterized protein in hlv 5'region</fullName>
    </recommendedName>
    <alternativeName>
        <fullName>ORF1</fullName>
    </alternativeName>
</protein>
<feature type="chain" id="PRO_0000066259" description="Uncharacterized protein in hlv 5'region">
    <location>
        <begin position="1" status="less than"/>
        <end position="160"/>
    </location>
</feature>
<feature type="non-terminal residue">
    <location>
        <position position="1"/>
    </location>
</feature>
<proteinExistence type="predicted"/>
<organism>
    <name type="scientific">Lactobacillus helveticus</name>
    <name type="common">Lactobacillus suntoryeus</name>
    <dbReference type="NCBI Taxonomy" id="1587"/>
    <lineage>
        <taxon>Bacteria</taxon>
        <taxon>Bacillati</taxon>
        <taxon>Bacillota</taxon>
        <taxon>Bacilli</taxon>
        <taxon>Lactobacillales</taxon>
        <taxon>Lactobacillaceae</taxon>
        <taxon>Lactobacillus</taxon>
    </lineage>
</organism>
<sequence>NSKDADPIYVGKNNYKYALTHYETFKGKTISPAKVQNVKFRVEKIVRFHGKISGAPLYLVASKDKKYSCWTTQAMLQYYYFNSKGMRGVVNPLKRIANRSADKNIISLKNKQNKRDFNAAMKAANKLKGSQKKFVVNSLKQLKKDNNIGVEGDNLLLFGF</sequence>
<dbReference type="EMBL" id="M59360">
    <property type="protein sequence ID" value="AAA63272.1"/>
    <property type="molecule type" value="Genomic_DNA"/>
</dbReference>
<dbReference type="PIR" id="A37145">
    <property type="entry name" value="A37145"/>
</dbReference>
<reference key="1">
    <citation type="journal article" date="1990" name="J. Bacteriol.">
        <title>Cloning, expression, and nucleotide sequence of the Lactobacillus helveticus 481 gene encoding the bacteriocin helveticin J.</title>
        <authorList>
            <person name="Joerger M.C."/>
            <person name="Klaenhammer T.R."/>
        </authorList>
    </citation>
    <scope>NUCLEOTIDE SEQUENCE [GENOMIC DNA]</scope>
    <source>
        <strain>481</strain>
    </source>
</reference>